<organism>
    <name type="scientific">Dichelobacter nodosus (strain VCS1703A)</name>
    <dbReference type="NCBI Taxonomy" id="246195"/>
    <lineage>
        <taxon>Bacteria</taxon>
        <taxon>Pseudomonadati</taxon>
        <taxon>Pseudomonadota</taxon>
        <taxon>Gammaproteobacteria</taxon>
        <taxon>Cardiobacteriales</taxon>
        <taxon>Cardiobacteriaceae</taxon>
        <taxon>Dichelobacter</taxon>
    </lineage>
</organism>
<evidence type="ECO:0000255" key="1">
    <source>
        <dbReference type="HAMAP-Rule" id="MF_01302"/>
    </source>
</evidence>
<evidence type="ECO:0000305" key="2"/>
<name>RS8_DICNV</name>
<dbReference type="EMBL" id="CP000513">
    <property type="protein sequence ID" value="ABQ13501.1"/>
    <property type="molecule type" value="Genomic_DNA"/>
</dbReference>
<dbReference type="SMR" id="A5EXA4"/>
<dbReference type="STRING" id="246195.DNO_1261"/>
<dbReference type="KEGG" id="dno:DNO_1261"/>
<dbReference type="eggNOG" id="COG0096">
    <property type="taxonomic scope" value="Bacteria"/>
</dbReference>
<dbReference type="HOGENOM" id="CLU_098428_0_0_6"/>
<dbReference type="OrthoDB" id="9802617at2"/>
<dbReference type="Proteomes" id="UP000000248">
    <property type="component" value="Chromosome"/>
</dbReference>
<dbReference type="GO" id="GO:1990904">
    <property type="term" value="C:ribonucleoprotein complex"/>
    <property type="evidence" value="ECO:0007669"/>
    <property type="project" value="UniProtKB-KW"/>
</dbReference>
<dbReference type="GO" id="GO:0005840">
    <property type="term" value="C:ribosome"/>
    <property type="evidence" value="ECO:0007669"/>
    <property type="project" value="UniProtKB-KW"/>
</dbReference>
<dbReference type="GO" id="GO:0019843">
    <property type="term" value="F:rRNA binding"/>
    <property type="evidence" value="ECO:0007669"/>
    <property type="project" value="UniProtKB-UniRule"/>
</dbReference>
<dbReference type="GO" id="GO:0003735">
    <property type="term" value="F:structural constituent of ribosome"/>
    <property type="evidence" value="ECO:0007669"/>
    <property type="project" value="InterPro"/>
</dbReference>
<dbReference type="GO" id="GO:0006412">
    <property type="term" value="P:translation"/>
    <property type="evidence" value="ECO:0007669"/>
    <property type="project" value="UniProtKB-UniRule"/>
</dbReference>
<dbReference type="FunFam" id="3.30.1370.30:FF:000002">
    <property type="entry name" value="30S ribosomal protein S8"/>
    <property type="match status" value="1"/>
</dbReference>
<dbReference type="FunFam" id="3.30.1490.10:FF:000001">
    <property type="entry name" value="30S ribosomal protein S8"/>
    <property type="match status" value="1"/>
</dbReference>
<dbReference type="Gene3D" id="3.30.1370.30">
    <property type="match status" value="1"/>
</dbReference>
<dbReference type="Gene3D" id="3.30.1490.10">
    <property type="match status" value="1"/>
</dbReference>
<dbReference type="HAMAP" id="MF_01302_B">
    <property type="entry name" value="Ribosomal_uS8_B"/>
    <property type="match status" value="1"/>
</dbReference>
<dbReference type="InterPro" id="IPR000630">
    <property type="entry name" value="Ribosomal_uS8"/>
</dbReference>
<dbReference type="InterPro" id="IPR047863">
    <property type="entry name" value="Ribosomal_uS8_CS"/>
</dbReference>
<dbReference type="InterPro" id="IPR035987">
    <property type="entry name" value="Ribosomal_uS8_sf"/>
</dbReference>
<dbReference type="NCBIfam" id="NF001109">
    <property type="entry name" value="PRK00136.1"/>
    <property type="match status" value="1"/>
</dbReference>
<dbReference type="PANTHER" id="PTHR11758">
    <property type="entry name" value="40S RIBOSOMAL PROTEIN S15A"/>
    <property type="match status" value="1"/>
</dbReference>
<dbReference type="Pfam" id="PF00410">
    <property type="entry name" value="Ribosomal_S8"/>
    <property type="match status" value="1"/>
</dbReference>
<dbReference type="SUPFAM" id="SSF56047">
    <property type="entry name" value="Ribosomal protein S8"/>
    <property type="match status" value="1"/>
</dbReference>
<dbReference type="PROSITE" id="PS00053">
    <property type="entry name" value="RIBOSOMAL_S8"/>
    <property type="match status" value="1"/>
</dbReference>
<accession>A5EXA4</accession>
<feature type="chain" id="PRO_0000305742" description="Small ribosomal subunit protein uS8">
    <location>
        <begin position="1"/>
        <end position="129"/>
    </location>
</feature>
<proteinExistence type="inferred from homology"/>
<comment type="function">
    <text evidence="1">One of the primary rRNA binding proteins, it binds directly to 16S rRNA central domain where it helps coordinate assembly of the platform of the 30S subunit.</text>
</comment>
<comment type="subunit">
    <text evidence="1">Part of the 30S ribosomal subunit. Contacts proteins S5 and S12.</text>
</comment>
<comment type="similarity">
    <text evidence="1">Belongs to the universal ribosomal protein uS8 family.</text>
</comment>
<protein>
    <recommendedName>
        <fullName evidence="1">Small ribosomal subunit protein uS8</fullName>
    </recommendedName>
    <alternativeName>
        <fullName evidence="2">30S ribosomal protein S8</fullName>
    </alternativeName>
</protein>
<gene>
    <name evidence="1" type="primary">rpsH</name>
    <name type="ordered locus">DNO_1261</name>
</gene>
<sequence>MLMDPVADMLTRVRNAQRVGRSFVIMPSSNQKKAIAEVLKEEGYIQSFEIKGDKKPELTIYLKYYQGRPVIETIKRVSRPGLRIFRNKDQLPRVQSGLGIAIISTSKGVMSDHKARELGVGGEVICMVA</sequence>
<keyword id="KW-1185">Reference proteome</keyword>
<keyword id="KW-0687">Ribonucleoprotein</keyword>
<keyword id="KW-0689">Ribosomal protein</keyword>
<keyword id="KW-0694">RNA-binding</keyword>
<keyword id="KW-0699">rRNA-binding</keyword>
<reference key="1">
    <citation type="journal article" date="2007" name="Nat. Biotechnol.">
        <title>Genome sequence and identification of candidate vaccine antigens from the animal pathogen Dichelobacter nodosus.</title>
        <authorList>
            <person name="Myers G.S.A."/>
            <person name="Parker D."/>
            <person name="Al-Hasani K."/>
            <person name="Kennan R.M."/>
            <person name="Seemann T."/>
            <person name="Ren Q."/>
            <person name="Badger J.H."/>
            <person name="Selengut J.D."/>
            <person name="Deboy R.T."/>
            <person name="Tettelin H."/>
            <person name="Boyce J.D."/>
            <person name="McCarl V.P."/>
            <person name="Han X."/>
            <person name="Nelson W.C."/>
            <person name="Madupu R."/>
            <person name="Mohamoud Y."/>
            <person name="Holley T."/>
            <person name="Fedorova N."/>
            <person name="Khouri H."/>
            <person name="Bottomley S.P."/>
            <person name="Whittington R.J."/>
            <person name="Adler B."/>
            <person name="Songer J.G."/>
            <person name="Rood J.I."/>
            <person name="Paulsen I.T."/>
        </authorList>
    </citation>
    <scope>NUCLEOTIDE SEQUENCE [LARGE SCALE GENOMIC DNA]</scope>
    <source>
        <strain>VCS1703A</strain>
    </source>
</reference>